<feature type="chain" id="PRO_0000119286" description="General transcription and DNA repair factor IIH subunit TFB5">
    <location>
        <begin position="1"/>
        <end position="75"/>
    </location>
</feature>
<proteinExistence type="inferred from homology"/>
<dbReference type="EMBL" id="CR382132">
    <property type="protein sequence ID" value="CAG78356.1"/>
    <property type="molecule type" value="Genomic_DNA"/>
</dbReference>
<dbReference type="RefSeq" id="XP_505547.1">
    <property type="nucleotide sequence ID" value="XM_505547.1"/>
</dbReference>
<dbReference type="SMR" id="Q6C1B5"/>
<dbReference type="FunCoup" id="Q6C1B5">
    <property type="interactions" value="167"/>
</dbReference>
<dbReference type="STRING" id="284591.Q6C1B5"/>
<dbReference type="EnsemblFungi" id="CAG78356">
    <property type="protein sequence ID" value="CAG78356"/>
    <property type="gene ID" value="YALI0_F17688g"/>
</dbReference>
<dbReference type="KEGG" id="yli:2909037"/>
<dbReference type="VEuPathDB" id="FungiDB:YALI0_F17688g"/>
<dbReference type="HOGENOM" id="CLU_166246_1_1_1"/>
<dbReference type="InParanoid" id="Q6C1B5"/>
<dbReference type="OMA" id="IYNPMDE"/>
<dbReference type="OrthoDB" id="105176at4891"/>
<dbReference type="Proteomes" id="UP000001300">
    <property type="component" value="Chromosome F"/>
</dbReference>
<dbReference type="GO" id="GO:0005829">
    <property type="term" value="C:cytosol"/>
    <property type="evidence" value="ECO:0007669"/>
    <property type="project" value="EnsemblFungi"/>
</dbReference>
<dbReference type="GO" id="GO:0000439">
    <property type="term" value="C:transcription factor TFIIH core complex"/>
    <property type="evidence" value="ECO:0000318"/>
    <property type="project" value="GO_Central"/>
</dbReference>
<dbReference type="GO" id="GO:0005675">
    <property type="term" value="C:transcription factor TFIIH holo complex"/>
    <property type="evidence" value="ECO:0000318"/>
    <property type="project" value="GO_Central"/>
</dbReference>
<dbReference type="GO" id="GO:0006294">
    <property type="term" value="P:nucleotide-excision repair, preincision complex assembly"/>
    <property type="evidence" value="ECO:0000318"/>
    <property type="project" value="GO_Central"/>
</dbReference>
<dbReference type="GO" id="GO:0006366">
    <property type="term" value="P:transcription by RNA polymerase II"/>
    <property type="evidence" value="ECO:0000318"/>
    <property type="project" value="GO_Central"/>
</dbReference>
<dbReference type="GO" id="GO:0006367">
    <property type="term" value="P:transcription initiation at RNA polymerase II promoter"/>
    <property type="evidence" value="ECO:0007669"/>
    <property type="project" value="EnsemblFungi"/>
</dbReference>
<dbReference type="FunFam" id="3.30.70.1220:FF:000002">
    <property type="entry name" value="RNA polymerase II transcription factor B subunit 5"/>
    <property type="match status" value="1"/>
</dbReference>
<dbReference type="Gene3D" id="3.30.70.1220">
    <property type="entry name" value="TFB5-like"/>
    <property type="match status" value="1"/>
</dbReference>
<dbReference type="InterPro" id="IPR035935">
    <property type="entry name" value="TFB5-like_sf"/>
</dbReference>
<dbReference type="InterPro" id="IPR009400">
    <property type="entry name" value="TFIIH_TTDA/Tfb5"/>
</dbReference>
<dbReference type="PANTHER" id="PTHR28580">
    <property type="entry name" value="GENERAL TRANSCRIPTION FACTOR IIH SUBUNIT 5"/>
    <property type="match status" value="1"/>
</dbReference>
<dbReference type="PANTHER" id="PTHR28580:SF1">
    <property type="entry name" value="GENERAL TRANSCRIPTION FACTOR IIH SUBUNIT 5"/>
    <property type="match status" value="1"/>
</dbReference>
<dbReference type="Pfam" id="PF06331">
    <property type="entry name" value="Tfb5"/>
    <property type="match status" value="1"/>
</dbReference>
<dbReference type="SMART" id="SM01395">
    <property type="entry name" value="Tbf5"/>
    <property type="match status" value="1"/>
</dbReference>
<dbReference type="SUPFAM" id="SSF142897">
    <property type="entry name" value="TFB5-like"/>
    <property type="match status" value="1"/>
</dbReference>
<gene>
    <name type="primary">TFB5</name>
    <name type="ordered locus">YALI0F17688g</name>
</gene>
<keyword id="KW-0227">DNA damage</keyword>
<keyword id="KW-0234">DNA repair</keyword>
<keyword id="KW-0539">Nucleus</keyword>
<keyword id="KW-1185">Reference proteome</keyword>
<keyword id="KW-0804">Transcription</keyword>
<keyword id="KW-0805">Transcription regulation</keyword>
<evidence type="ECO:0000250" key="1"/>
<evidence type="ECO:0000250" key="2">
    <source>
        <dbReference type="UniProtKB" id="Q3E7C1"/>
    </source>
</evidence>
<evidence type="ECO:0000305" key="3"/>
<sequence>MPKATRGVLIECDPSIKALIVNIDSSQHNIILDELDDTHLMIHPSMVEVVKQKLNKMLAENTYNPNEEAAKATGK</sequence>
<protein>
    <recommendedName>
        <fullName>General transcription and DNA repair factor IIH subunit TFB5</fullName>
        <shortName>TFIIH subunit TFB5</shortName>
    </recommendedName>
    <alternativeName>
        <fullName>RNA polymerase II transcription factor B subunit 5</fullName>
    </alternativeName>
</protein>
<accession>Q6C1B5</accession>
<name>TFB5_YARLI</name>
<comment type="function">
    <text evidence="2">Component of the general transcription and DNA repair factor IIH (TFIIH) core complex, which is involved in general and transcription-coupled nucleotide excision repair (NER) of damaged DNA and, when complexed to TFIIK, in RNA transcription by RNA polymerase II. In NER, TFIIH acts by opening DNA around the lesion to allow the excision of the damaged oligonucleotide and its replacement by a new DNA fragment. In transcription, TFIIH has an essential role in transcription initiation. When the pre-initiation complex (PIC) has been established, TFIIH is required for promoter opening and promoter escape. Phosphorylation of the C-terminal tail (CTD) of the largest subunit of RNA polymerase II by the kinase module TFIIK controls the initiation of transcription.</text>
</comment>
<comment type="subunit">
    <text evidence="2">Component of the 7-subunit TFIIH core complex composed of XPB/SSL2, XPD/RAD3, SSL1, TFB1, TFB2, TFB4 and TFB5, which is active in NER. The core complex associates with the 3-subunit CTD-kinase module TFIIK composed of CCL1, KIN28 and TFB3 to form the 10-subunit holoenzyme (holo-TFIIH) active in transcription.</text>
</comment>
<comment type="subcellular location">
    <subcellularLocation>
        <location evidence="1">Nucleus</location>
    </subcellularLocation>
</comment>
<comment type="similarity">
    <text evidence="3">Belongs to the TFB5 family.</text>
</comment>
<reference key="1">
    <citation type="journal article" date="2004" name="Nature">
        <title>Genome evolution in yeasts.</title>
        <authorList>
            <person name="Dujon B."/>
            <person name="Sherman D."/>
            <person name="Fischer G."/>
            <person name="Durrens P."/>
            <person name="Casaregola S."/>
            <person name="Lafontaine I."/>
            <person name="de Montigny J."/>
            <person name="Marck C."/>
            <person name="Neuveglise C."/>
            <person name="Talla E."/>
            <person name="Goffard N."/>
            <person name="Frangeul L."/>
            <person name="Aigle M."/>
            <person name="Anthouard V."/>
            <person name="Babour A."/>
            <person name="Barbe V."/>
            <person name="Barnay S."/>
            <person name="Blanchin S."/>
            <person name="Beckerich J.-M."/>
            <person name="Beyne E."/>
            <person name="Bleykasten C."/>
            <person name="Boisrame A."/>
            <person name="Boyer J."/>
            <person name="Cattolico L."/>
            <person name="Confanioleri F."/>
            <person name="de Daruvar A."/>
            <person name="Despons L."/>
            <person name="Fabre E."/>
            <person name="Fairhead C."/>
            <person name="Ferry-Dumazet H."/>
            <person name="Groppi A."/>
            <person name="Hantraye F."/>
            <person name="Hennequin C."/>
            <person name="Jauniaux N."/>
            <person name="Joyet P."/>
            <person name="Kachouri R."/>
            <person name="Kerrest A."/>
            <person name="Koszul R."/>
            <person name="Lemaire M."/>
            <person name="Lesur I."/>
            <person name="Ma L."/>
            <person name="Muller H."/>
            <person name="Nicaud J.-M."/>
            <person name="Nikolski M."/>
            <person name="Oztas S."/>
            <person name="Ozier-Kalogeropoulos O."/>
            <person name="Pellenz S."/>
            <person name="Potier S."/>
            <person name="Richard G.-F."/>
            <person name="Straub M.-L."/>
            <person name="Suleau A."/>
            <person name="Swennen D."/>
            <person name="Tekaia F."/>
            <person name="Wesolowski-Louvel M."/>
            <person name="Westhof E."/>
            <person name="Wirth B."/>
            <person name="Zeniou-Meyer M."/>
            <person name="Zivanovic Y."/>
            <person name="Bolotin-Fukuhara M."/>
            <person name="Thierry A."/>
            <person name="Bouchier C."/>
            <person name="Caudron B."/>
            <person name="Scarpelli C."/>
            <person name="Gaillardin C."/>
            <person name="Weissenbach J."/>
            <person name="Wincker P."/>
            <person name="Souciet J.-L."/>
        </authorList>
    </citation>
    <scope>NUCLEOTIDE SEQUENCE [LARGE SCALE GENOMIC DNA]</scope>
    <source>
        <strain>CLIB 122 / E 150</strain>
    </source>
</reference>
<organism>
    <name type="scientific">Yarrowia lipolytica (strain CLIB 122 / E 150)</name>
    <name type="common">Yeast</name>
    <name type="synonym">Candida lipolytica</name>
    <dbReference type="NCBI Taxonomy" id="284591"/>
    <lineage>
        <taxon>Eukaryota</taxon>
        <taxon>Fungi</taxon>
        <taxon>Dikarya</taxon>
        <taxon>Ascomycota</taxon>
        <taxon>Saccharomycotina</taxon>
        <taxon>Dipodascomycetes</taxon>
        <taxon>Dipodascales</taxon>
        <taxon>Dipodascales incertae sedis</taxon>
        <taxon>Yarrowia</taxon>
    </lineage>
</organism>